<reference key="1">
    <citation type="journal article" date="2008" name="Proc. Natl. Acad. Sci. U.S.A.">
        <title>Complete genome of the uncultured termite group 1 bacteria in a single host protist cell.</title>
        <authorList>
            <person name="Hongoh Y."/>
            <person name="Sharma V.K."/>
            <person name="Prakash T."/>
            <person name="Noda S."/>
            <person name="Taylor T.D."/>
            <person name="Kudo T."/>
            <person name="Sakaki Y."/>
            <person name="Toyoda A."/>
            <person name="Hattori M."/>
            <person name="Ohkuma M."/>
        </authorList>
    </citation>
    <scope>NUCLEOTIDE SEQUENCE [LARGE SCALE GENOMIC DNA]</scope>
</reference>
<organism>
    <name type="scientific">Endomicrobium trichonymphae</name>
    <dbReference type="NCBI Taxonomy" id="1408204"/>
    <lineage>
        <taxon>Bacteria</taxon>
        <taxon>Pseudomonadati</taxon>
        <taxon>Elusimicrobiota</taxon>
        <taxon>Endomicrobiia</taxon>
        <taxon>Endomicrobiales</taxon>
        <taxon>Endomicrobiaceae</taxon>
        <taxon>Candidatus Endomicrobiellum</taxon>
    </lineage>
</organism>
<proteinExistence type="inferred from homology"/>
<gene>
    <name evidence="1" type="primary">coaX</name>
    <name type="ordered locus">TGRD_290</name>
</gene>
<protein>
    <recommendedName>
        <fullName evidence="1">Type III pantothenate kinase</fullName>
        <ecNumber evidence="1">2.7.1.33</ecNumber>
    </recommendedName>
    <alternativeName>
        <fullName evidence="1">PanK-III</fullName>
    </alternativeName>
    <alternativeName>
        <fullName evidence="1">Pantothenic acid kinase</fullName>
    </alternativeName>
</protein>
<comment type="function">
    <text evidence="1">Catalyzes the phosphorylation of pantothenate (Pan), the first step in CoA biosynthesis.</text>
</comment>
<comment type="catalytic activity">
    <reaction evidence="1">
        <text>(R)-pantothenate + ATP = (R)-4'-phosphopantothenate + ADP + H(+)</text>
        <dbReference type="Rhea" id="RHEA:16373"/>
        <dbReference type="ChEBI" id="CHEBI:10986"/>
        <dbReference type="ChEBI" id="CHEBI:15378"/>
        <dbReference type="ChEBI" id="CHEBI:29032"/>
        <dbReference type="ChEBI" id="CHEBI:30616"/>
        <dbReference type="ChEBI" id="CHEBI:456216"/>
        <dbReference type="EC" id="2.7.1.33"/>
    </reaction>
</comment>
<comment type="cofactor">
    <cofactor evidence="1">
        <name>NH4(+)</name>
        <dbReference type="ChEBI" id="CHEBI:28938"/>
    </cofactor>
    <cofactor evidence="1">
        <name>K(+)</name>
        <dbReference type="ChEBI" id="CHEBI:29103"/>
    </cofactor>
    <text evidence="1">A monovalent cation. Ammonium or potassium.</text>
</comment>
<comment type="pathway">
    <text evidence="1">Cofactor biosynthesis; coenzyme A biosynthesis; CoA from (R)-pantothenate: step 1/5.</text>
</comment>
<comment type="subunit">
    <text evidence="1">Homodimer.</text>
</comment>
<comment type="subcellular location">
    <subcellularLocation>
        <location evidence="1">Cytoplasm</location>
    </subcellularLocation>
</comment>
<comment type="similarity">
    <text evidence="1">Belongs to the type III pantothenate kinase family.</text>
</comment>
<sequence>MFLALDIGNTNITVGLFAMKDKKVLPEPLKVWIMSTVKERTFDEYATLLMNMLFYDGFDAKQLSNFAVASVVPSLNAVFEELIKKYFGEKTFFVNSKNCGGLVFAAGNSKETGADRIANVVAAYSVYGDSCIVIDFGTATTFDCINSEGIYIGGAIAPGPSISARLLNLKTEQLPRVEVKKPLKSIGLTTVECMQSGLYFGYTGLVKELIARIKNEMKIKHIIATGGLAGLMFDEIEEIEIILPYLTLSGVRIVWEKVI</sequence>
<evidence type="ECO:0000255" key="1">
    <source>
        <dbReference type="HAMAP-Rule" id="MF_01274"/>
    </source>
</evidence>
<name>COAX_ENDTX</name>
<feature type="chain" id="PRO_1000165208" description="Type III pantothenate kinase">
    <location>
        <begin position="1"/>
        <end position="259"/>
    </location>
</feature>
<feature type="active site" description="Proton acceptor" evidence="1">
    <location>
        <position position="115"/>
    </location>
</feature>
<feature type="binding site" evidence="1">
    <location>
        <begin position="6"/>
        <end position="13"/>
    </location>
    <ligand>
        <name>ATP</name>
        <dbReference type="ChEBI" id="CHEBI:30616"/>
    </ligand>
</feature>
<feature type="binding site" evidence="1">
    <location>
        <begin position="113"/>
        <end position="116"/>
    </location>
    <ligand>
        <name>substrate</name>
    </ligand>
</feature>
<feature type="binding site" evidence="1">
    <location>
        <position position="135"/>
    </location>
    <ligand>
        <name>K(+)</name>
        <dbReference type="ChEBI" id="CHEBI:29103"/>
    </ligand>
</feature>
<feature type="binding site" evidence="1">
    <location>
        <position position="138"/>
    </location>
    <ligand>
        <name>ATP</name>
        <dbReference type="ChEBI" id="CHEBI:30616"/>
    </ligand>
</feature>
<feature type="binding site" evidence="1">
    <location>
        <position position="190"/>
    </location>
    <ligand>
        <name>substrate</name>
    </ligand>
</feature>
<accession>B1GZU1</accession>
<keyword id="KW-0067">ATP-binding</keyword>
<keyword id="KW-0173">Coenzyme A biosynthesis</keyword>
<keyword id="KW-0963">Cytoplasm</keyword>
<keyword id="KW-0418">Kinase</keyword>
<keyword id="KW-0479">Metal-binding</keyword>
<keyword id="KW-0547">Nucleotide-binding</keyword>
<keyword id="KW-0630">Potassium</keyword>
<keyword id="KW-0808">Transferase</keyword>
<dbReference type="EC" id="2.7.1.33" evidence="1"/>
<dbReference type="EMBL" id="AP009510">
    <property type="protein sequence ID" value="BAG13773.1"/>
    <property type="molecule type" value="Genomic_DNA"/>
</dbReference>
<dbReference type="RefSeq" id="WP_015423300.1">
    <property type="nucleotide sequence ID" value="NC_020419.1"/>
</dbReference>
<dbReference type="SMR" id="B1GZU1"/>
<dbReference type="STRING" id="471821.TGRD_290"/>
<dbReference type="KEGG" id="rsd:TGRD_290"/>
<dbReference type="PATRIC" id="fig|471821.5.peg.447"/>
<dbReference type="HOGENOM" id="CLU_066627_1_0_0"/>
<dbReference type="UniPathway" id="UPA00241">
    <property type="reaction ID" value="UER00352"/>
</dbReference>
<dbReference type="Proteomes" id="UP000001691">
    <property type="component" value="Chromosome"/>
</dbReference>
<dbReference type="GO" id="GO:0005737">
    <property type="term" value="C:cytoplasm"/>
    <property type="evidence" value="ECO:0007669"/>
    <property type="project" value="UniProtKB-SubCell"/>
</dbReference>
<dbReference type="GO" id="GO:0005524">
    <property type="term" value="F:ATP binding"/>
    <property type="evidence" value="ECO:0007669"/>
    <property type="project" value="UniProtKB-UniRule"/>
</dbReference>
<dbReference type="GO" id="GO:0046872">
    <property type="term" value="F:metal ion binding"/>
    <property type="evidence" value="ECO:0007669"/>
    <property type="project" value="UniProtKB-KW"/>
</dbReference>
<dbReference type="GO" id="GO:0004594">
    <property type="term" value="F:pantothenate kinase activity"/>
    <property type="evidence" value="ECO:0007669"/>
    <property type="project" value="UniProtKB-UniRule"/>
</dbReference>
<dbReference type="GO" id="GO:0015937">
    <property type="term" value="P:coenzyme A biosynthetic process"/>
    <property type="evidence" value="ECO:0007669"/>
    <property type="project" value="UniProtKB-UniRule"/>
</dbReference>
<dbReference type="CDD" id="cd24015">
    <property type="entry name" value="ASKHA_NBD_PanK-III"/>
    <property type="match status" value="1"/>
</dbReference>
<dbReference type="Gene3D" id="3.30.420.40">
    <property type="match status" value="2"/>
</dbReference>
<dbReference type="HAMAP" id="MF_01274">
    <property type="entry name" value="Pantothen_kinase_3"/>
    <property type="match status" value="1"/>
</dbReference>
<dbReference type="InterPro" id="IPR043129">
    <property type="entry name" value="ATPase_NBD"/>
</dbReference>
<dbReference type="InterPro" id="IPR004619">
    <property type="entry name" value="Type_III_PanK"/>
</dbReference>
<dbReference type="NCBIfam" id="TIGR00671">
    <property type="entry name" value="baf"/>
    <property type="match status" value="1"/>
</dbReference>
<dbReference type="NCBIfam" id="NF009855">
    <property type="entry name" value="PRK13321.1"/>
    <property type="match status" value="1"/>
</dbReference>
<dbReference type="PANTHER" id="PTHR34265">
    <property type="entry name" value="TYPE III PANTOTHENATE KINASE"/>
    <property type="match status" value="1"/>
</dbReference>
<dbReference type="PANTHER" id="PTHR34265:SF1">
    <property type="entry name" value="TYPE III PANTOTHENATE KINASE"/>
    <property type="match status" value="1"/>
</dbReference>
<dbReference type="Pfam" id="PF03309">
    <property type="entry name" value="Pan_kinase"/>
    <property type="match status" value="1"/>
</dbReference>
<dbReference type="SUPFAM" id="SSF53067">
    <property type="entry name" value="Actin-like ATPase domain"/>
    <property type="match status" value="2"/>
</dbReference>